<evidence type="ECO:0000250" key="1"/>
<evidence type="ECO:0000255" key="2">
    <source>
        <dbReference type="HAMAP-Rule" id="MF_01371"/>
    </source>
</evidence>
<evidence type="ECO:0000269" key="3">
    <source>
    </source>
</evidence>
<evidence type="ECO:0000305" key="4"/>
<evidence type="ECO:0007744" key="5">
    <source>
        <dbReference type="PDB" id="6HA1"/>
    </source>
</evidence>
<evidence type="ECO:0007744" key="6">
    <source>
        <dbReference type="PDB" id="6HA8"/>
    </source>
</evidence>
<evidence type="ECO:0007829" key="7">
    <source>
        <dbReference type="PDB" id="7S9U"/>
    </source>
</evidence>
<evidence type="ECO:0007829" key="8">
    <source>
        <dbReference type="PDB" id="7SAE"/>
    </source>
</evidence>
<evidence type="ECO:0007829" key="9">
    <source>
        <dbReference type="PDB" id="8S1P"/>
    </source>
</evidence>
<feature type="initiator methionine" description="Removed" evidence="1">
    <location>
        <position position="1"/>
    </location>
</feature>
<feature type="chain" id="PRO_0000104583" description="Large ribosomal subunit protein uL30">
    <location>
        <begin position="2"/>
        <end position="59"/>
    </location>
</feature>
<feature type="strand" evidence="9">
    <location>
        <begin position="3"/>
        <end position="8"/>
    </location>
</feature>
<feature type="strand" evidence="8">
    <location>
        <begin position="13"/>
        <end position="15"/>
    </location>
</feature>
<feature type="helix" evidence="9">
    <location>
        <begin position="17"/>
        <end position="25"/>
    </location>
</feature>
<feature type="strand" evidence="7">
    <location>
        <begin position="30"/>
        <end position="32"/>
    </location>
</feature>
<feature type="strand" evidence="9">
    <location>
        <begin position="34"/>
        <end position="38"/>
    </location>
</feature>
<feature type="helix" evidence="9">
    <location>
        <begin position="41"/>
        <end position="49"/>
    </location>
</feature>
<feature type="turn" evidence="9">
    <location>
        <begin position="50"/>
        <end position="53"/>
    </location>
</feature>
<feature type="strand" evidence="9">
    <location>
        <begin position="54"/>
        <end position="58"/>
    </location>
</feature>
<proteinExistence type="evidence at protein level"/>
<dbReference type="EMBL" id="D00619">
    <property type="protein sequence ID" value="BAA00493.1"/>
    <property type="molecule type" value="Genomic_DNA"/>
</dbReference>
<dbReference type="EMBL" id="M31102">
    <property type="protein sequence ID" value="AAB59116.1"/>
    <property type="molecule type" value="Genomic_DNA"/>
</dbReference>
<dbReference type="EMBL" id="L47971">
    <property type="protein sequence ID" value="AAB06817.1"/>
    <property type="molecule type" value="Genomic_DNA"/>
</dbReference>
<dbReference type="EMBL" id="AL009126">
    <property type="protein sequence ID" value="CAB11910.1"/>
    <property type="molecule type" value="Genomic_DNA"/>
</dbReference>
<dbReference type="PIR" id="S12681">
    <property type="entry name" value="R5BS30"/>
</dbReference>
<dbReference type="RefSeq" id="NP_388015.1">
    <property type="nucleotide sequence ID" value="NC_000964.3"/>
</dbReference>
<dbReference type="RefSeq" id="WP_003156497.1">
    <property type="nucleotide sequence ID" value="NZ_OZ025638.1"/>
</dbReference>
<dbReference type="PDB" id="3J3V">
    <property type="method" value="EM"/>
    <property type="resolution" value="13.30 A"/>
    <property type="chains" value="Y=1-59"/>
</dbReference>
<dbReference type="PDB" id="3J9W">
    <property type="method" value="EM"/>
    <property type="resolution" value="3.90 A"/>
    <property type="chains" value="B2=1-59"/>
</dbReference>
<dbReference type="PDB" id="5NJT">
    <property type="method" value="EM"/>
    <property type="resolution" value="3.80 A"/>
    <property type="chains" value="w=2-59"/>
</dbReference>
<dbReference type="PDB" id="6HA1">
    <property type="method" value="EM"/>
    <property type="resolution" value="3.10 A"/>
    <property type="chains" value="Z=1-59"/>
</dbReference>
<dbReference type="PDB" id="6HA8">
    <property type="method" value="EM"/>
    <property type="resolution" value="3.50 A"/>
    <property type="chains" value="Z=1-59"/>
</dbReference>
<dbReference type="PDB" id="6HTQ">
    <property type="method" value="EM"/>
    <property type="resolution" value="4.50 A"/>
    <property type="chains" value="Y=2-59"/>
</dbReference>
<dbReference type="PDB" id="6PPF">
    <property type="method" value="EM"/>
    <property type="resolution" value="3.40 A"/>
    <property type="chains" value="Z=1-59"/>
</dbReference>
<dbReference type="PDB" id="6PPK">
    <property type="method" value="EM"/>
    <property type="resolution" value="4.40 A"/>
    <property type="chains" value="Z=1-59"/>
</dbReference>
<dbReference type="PDB" id="6TNN">
    <property type="method" value="EM"/>
    <property type="resolution" value="3.07 A"/>
    <property type="chains" value="w=1-59"/>
</dbReference>
<dbReference type="PDB" id="6TPQ">
    <property type="method" value="EM"/>
    <property type="resolution" value="3.07 A"/>
    <property type="chains" value="w=1-59"/>
</dbReference>
<dbReference type="PDB" id="7AQC">
    <property type="method" value="EM"/>
    <property type="resolution" value="2.99 A"/>
    <property type="chains" value="Z=1-59"/>
</dbReference>
<dbReference type="PDB" id="7AQD">
    <property type="method" value="EM"/>
    <property type="resolution" value="3.10 A"/>
    <property type="chains" value="Z=1-59"/>
</dbReference>
<dbReference type="PDB" id="7AS8">
    <property type="method" value="EM"/>
    <property type="resolution" value="2.90 A"/>
    <property type="chains" value="d=1-59"/>
</dbReference>
<dbReference type="PDB" id="7AS9">
    <property type="method" value="EM"/>
    <property type="resolution" value="3.50 A"/>
    <property type="chains" value="d=1-59"/>
</dbReference>
<dbReference type="PDB" id="7O5B">
    <property type="method" value="EM"/>
    <property type="resolution" value="3.33 A"/>
    <property type="chains" value="x=1-59"/>
</dbReference>
<dbReference type="PDB" id="7OPE">
    <property type="method" value="EM"/>
    <property type="resolution" value="3.20 A"/>
    <property type="chains" value="d=1-59"/>
</dbReference>
<dbReference type="PDB" id="7QGU">
    <property type="method" value="EM"/>
    <property type="resolution" value="4.75 A"/>
    <property type="chains" value="a=1-59"/>
</dbReference>
<dbReference type="PDB" id="7QH4">
    <property type="method" value="EM"/>
    <property type="resolution" value="5.45 A"/>
    <property type="chains" value="a=1-59"/>
</dbReference>
<dbReference type="PDB" id="7QV1">
    <property type="method" value="EM"/>
    <property type="resolution" value="3.50 A"/>
    <property type="chains" value="Z=1-59"/>
</dbReference>
<dbReference type="PDB" id="7QV2">
    <property type="method" value="EM"/>
    <property type="resolution" value="3.50 A"/>
    <property type="chains" value="Z=1-59"/>
</dbReference>
<dbReference type="PDB" id="7QV3">
    <property type="method" value="EM"/>
    <property type="resolution" value="5.14 A"/>
    <property type="chains" value="Z=1-59"/>
</dbReference>
<dbReference type="PDB" id="7S9U">
    <property type="method" value="EM"/>
    <property type="resolution" value="3.20 A"/>
    <property type="chains" value="Z=1-59"/>
</dbReference>
<dbReference type="PDB" id="7SAE">
    <property type="method" value="EM"/>
    <property type="resolution" value="3.00 A"/>
    <property type="chains" value="Z=1-59"/>
</dbReference>
<dbReference type="PDB" id="8BUU">
    <property type="method" value="EM"/>
    <property type="resolution" value="2.90 A"/>
    <property type="chains" value="Z=1-59"/>
</dbReference>
<dbReference type="PDB" id="8QCQ">
    <property type="method" value="EM"/>
    <property type="resolution" value="2.30 A"/>
    <property type="chains" value="Z=1-59"/>
</dbReference>
<dbReference type="PDB" id="8QPP">
    <property type="method" value="EM"/>
    <property type="resolution" value="3.40 A"/>
    <property type="chains" value="x=2-59"/>
</dbReference>
<dbReference type="PDB" id="8R55">
    <property type="method" value="EM"/>
    <property type="resolution" value="3.57 A"/>
    <property type="chains" value="x=2-59"/>
</dbReference>
<dbReference type="PDB" id="8S1P">
    <property type="method" value="EM"/>
    <property type="resolution" value="1.96 A"/>
    <property type="chains" value="Z=1-59"/>
</dbReference>
<dbReference type="PDB" id="8S1U">
    <property type="method" value="EM"/>
    <property type="resolution" value="3.40 A"/>
    <property type="chains" value="Z=1-59"/>
</dbReference>
<dbReference type="PDB" id="9BS0">
    <property type="method" value="EM"/>
    <property type="resolution" value="3.30 A"/>
    <property type="chains" value="S=1-59"/>
</dbReference>
<dbReference type="PDB" id="9BSL">
    <property type="method" value="EM"/>
    <property type="resolution" value="3.10 A"/>
    <property type="chains" value="S=1-59"/>
</dbReference>
<dbReference type="PDB" id="9BSS">
    <property type="method" value="EM"/>
    <property type="resolution" value="3.10 A"/>
    <property type="chains" value="S=1-59"/>
</dbReference>
<dbReference type="PDBsum" id="3J3V"/>
<dbReference type="PDBsum" id="3J9W"/>
<dbReference type="PDBsum" id="5NJT"/>
<dbReference type="PDBsum" id="6HA1"/>
<dbReference type="PDBsum" id="6HA8"/>
<dbReference type="PDBsum" id="6HTQ"/>
<dbReference type="PDBsum" id="6PPF"/>
<dbReference type="PDBsum" id="6PPK"/>
<dbReference type="PDBsum" id="6TNN"/>
<dbReference type="PDBsum" id="6TPQ"/>
<dbReference type="PDBsum" id="7AQC"/>
<dbReference type="PDBsum" id="7AQD"/>
<dbReference type="PDBsum" id="7AS8"/>
<dbReference type="PDBsum" id="7AS9"/>
<dbReference type="PDBsum" id="7O5B"/>
<dbReference type="PDBsum" id="7OPE"/>
<dbReference type="PDBsum" id="7QGU"/>
<dbReference type="PDBsum" id="7QH4"/>
<dbReference type="PDBsum" id="7QV1"/>
<dbReference type="PDBsum" id="7QV2"/>
<dbReference type="PDBsum" id="7QV3"/>
<dbReference type="PDBsum" id="7S9U"/>
<dbReference type="PDBsum" id="7SAE"/>
<dbReference type="PDBsum" id="8BUU"/>
<dbReference type="PDBsum" id="8QCQ"/>
<dbReference type="PDBsum" id="8QPP"/>
<dbReference type="PDBsum" id="8R55"/>
<dbReference type="PDBsum" id="8S1P"/>
<dbReference type="PDBsum" id="8S1U"/>
<dbReference type="PDBsum" id="9BS0"/>
<dbReference type="PDBsum" id="9BSL"/>
<dbReference type="PDBsum" id="9BSS"/>
<dbReference type="EMDB" id="EMD-0176"/>
<dbReference type="EMDB" id="EMD-0177"/>
<dbReference type="EMDB" id="EMD-0270"/>
<dbReference type="EMDB" id="EMD-10535"/>
<dbReference type="EMDB" id="EMD-10543"/>
<dbReference type="EMDB" id="EMD-11862"/>
<dbReference type="EMDB" id="EMD-11864"/>
<dbReference type="EMDB" id="EMD-11889"/>
<dbReference type="EMDB" id="EMD-11890"/>
<dbReference type="EMDB" id="EMD-12734"/>
<dbReference type="EMDB" id="EMD-13017"/>
<dbReference type="EMDB" id="EMD-14157"/>
<dbReference type="EMDB" id="EMD-14158"/>
<dbReference type="EMDB" id="EMD-14159"/>
<dbReference type="EMDB" id="EMD-16246"/>
<dbReference type="EMDB" id="EMD-18332"/>
<dbReference type="EMDB" id="EMD-19638"/>
<dbReference type="EMDB" id="EMD-19641"/>
<dbReference type="EMDB" id="EMD-3656"/>
<dbReference type="EMDB" id="EMD-44849"/>
<dbReference type="EMDB" id="EMD-44869"/>
<dbReference type="EMDB" id="EMD-44871"/>
<dbReference type="SMR" id="P19947"/>
<dbReference type="FunCoup" id="P19947">
    <property type="interactions" value="340"/>
</dbReference>
<dbReference type="IntAct" id="P19947">
    <property type="interactions" value="1"/>
</dbReference>
<dbReference type="STRING" id="224308.BSU01340"/>
<dbReference type="jPOST" id="P19947"/>
<dbReference type="PaxDb" id="224308-BSU01340"/>
<dbReference type="EnsemblBacteria" id="CAB11910">
    <property type="protein sequence ID" value="CAB11910"/>
    <property type="gene ID" value="BSU_01340"/>
</dbReference>
<dbReference type="GeneID" id="93079298"/>
<dbReference type="GeneID" id="936920"/>
<dbReference type="KEGG" id="bsu:BSU01340"/>
<dbReference type="PATRIC" id="fig|224308.179.peg.137"/>
<dbReference type="eggNOG" id="COG1841">
    <property type="taxonomic scope" value="Bacteria"/>
</dbReference>
<dbReference type="InParanoid" id="P19947"/>
<dbReference type="OrthoDB" id="9812790at2"/>
<dbReference type="PhylomeDB" id="P19947"/>
<dbReference type="BioCyc" id="BSUB:BSU01340-MONOMER"/>
<dbReference type="EvolutionaryTrace" id="P19947"/>
<dbReference type="PRO" id="PR:P19947"/>
<dbReference type="Proteomes" id="UP000001570">
    <property type="component" value="Chromosome"/>
</dbReference>
<dbReference type="GO" id="GO:0022625">
    <property type="term" value="C:cytosolic large ribosomal subunit"/>
    <property type="evidence" value="ECO:0000318"/>
    <property type="project" value="GO_Central"/>
</dbReference>
<dbReference type="GO" id="GO:0003735">
    <property type="term" value="F:structural constituent of ribosome"/>
    <property type="evidence" value="ECO:0007669"/>
    <property type="project" value="InterPro"/>
</dbReference>
<dbReference type="GO" id="GO:0006412">
    <property type="term" value="P:translation"/>
    <property type="evidence" value="ECO:0007669"/>
    <property type="project" value="UniProtKB-UniRule"/>
</dbReference>
<dbReference type="CDD" id="cd01658">
    <property type="entry name" value="Ribosomal_L30"/>
    <property type="match status" value="1"/>
</dbReference>
<dbReference type="FunFam" id="3.30.1390.20:FF:000001">
    <property type="entry name" value="50S ribosomal protein L30"/>
    <property type="match status" value="1"/>
</dbReference>
<dbReference type="Gene3D" id="3.30.1390.20">
    <property type="entry name" value="Ribosomal protein L30, ferredoxin-like fold domain"/>
    <property type="match status" value="1"/>
</dbReference>
<dbReference type="HAMAP" id="MF_01371_B">
    <property type="entry name" value="Ribosomal_uL30_B"/>
    <property type="match status" value="1"/>
</dbReference>
<dbReference type="InterPro" id="IPR036919">
    <property type="entry name" value="Ribo_uL30_ferredoxin-like_sf"/>
</dbReference>
<dbReference type="InterPro" id="IPR005996">
    <property type="entry name" value="Ribosomal_uL30_bac-type"/>
</dbReference>
<dbReference type="InterPro" id="IPR018038">
    <property type="entry name" value="Ribosomal_uL30_CS"/>
</dbReference>
<dbReference type="InterPro" id="IPR016082">
    <property type="entry name" value="Ribosomal_uL30_ferredoxin-like"/>
</dbReference>
<dbReference type="NCBIfam" id="TIGR01308">
    <property type="entry name" value="rpmD_bact"/>
    <property type="match status" value="1"/>
</dbReference>
<dbReference type="PANTHER" id="PTHR15892:SF2">
    <property type="entry name" value="LARGE RIBOSOMAL SUBUNIT PROTEIN UL30M"/>
    <property type="match status" value="1"/>
</dbReference>
<dbReference type="PANTHER" id="PTHR15892">
    <property type="entry name" value="MITOCHONDRIAL RIBOSOMAL PROTEIN L30"/>
    <property type="match status" value="1"/>
</dbReference>
<dbReference type="Pfam" id="PF00327">
    <property type="entry name" value="Ribosomal_L30"/>
    <property type="match status" value="1"/>
</dbReference>
<dbReference type="PIRSF" id="PIRSF002211">
    <property type="entry name" value="Ribosomal_L30_bac-type"/>
    <property type="match status" value="1"/>
</dbReference>
<dbReference type="SUPFAM" id="SSF55129">
    <property type="entry name" value="Ribosomal protein L30p/L7e"/>
    <property type="match status" value="1"/>
</dbReference>
<dbReference type="PROSITE" id="PS00634">
    <property type="entry name" value="RIBOSOMAL_L30"/>
    <property type="match status" value="1"/>
</dbReference>
<sequence length="59" mass="6638">MAKLEITLKRSVIGRPEDQRVTVRTLGLKKTNQTVVHEDNAAIRGMINKVSHLVSVKEQ</sequence>
<gene>
    <name evidence="2" type="primary">rpmD</name>
    <name type="ordered locus">BSU01340</name>
</gene>
<organism>
    <name type="scientific">Bacillus subtilis (strain 168)</name>
    <dbReference type="NCBI Taxonomy" id="224308"/>
    <lineage>
        <taxon>Bacteria</taxon>
        <taxon>Bacillati</taxon>
        <taxon>Bacillota</taxon>
        <taxon>Bacilli</taxon>
        <taxon>Bacillales</taxon>
        <taxon>Bacillaceae</taxon>
        <taxon>Bacillus</taxon>
    </lineage>
</organism>
<protein>
    <recommendedName>
        <fullName evidence="2">Large ribosomal subunit protein uL30</fullName>
    </recommendedName>
    <alternativeName>
        <fullName evidence="4">50S ribosomal protein L30</fullName>
    </alternativeName>
    <alternativeName>
        <fullName>BL27</fullName>
    </alternativeName>
</protein>
<name>RL30_BACSU</name>
<keyword id="KW-0002">3D-structure</keyword>
<keyword id="KW-1185">Reference proteome</keyword>
<keyword id="KW-0687">Ribonucleoprotein</keyword>
<keyword id="KW-0689">Ribosomal protein</keyword>
<comment type="subunit">
    <text evidence="3">Part of the 50S ribosomal subunit.</text>
</comment>
<comment type="similarity">
    <text evidence="2">Belongs to the universal ribosomal protein uL30 family.</text>
</comment>
<reference key="1">
    <citation type="journal article" date="1990" name="J. Biochem.">
        <title>Cloning and characterization of a Bacillus subtilis gene homologous to E. coli secY.</title>
        <authorList>
            <person name="Nakamura K."/>
            <person name="Nakamura A."/>
            <person name="Takamatsu H."/>
            <person name="Yoshikawa H."/>
            <person name="Yamane K."/>
        </authorList>
    </citation>
    <scope>NUCLEOTIDE SEQUENCE [GENOMIC DNA]</scope>
</reference>
<reference key="2">
    <citation type="journal article" date="1990" name="Nucleic Acids Res.">
        <title>Sequence of the Bacillus subtilis spectinomycin resistance gene region.</title>
        <authorList>
            <person name="Yoshikawa H."/>
            <person name="Doi R.H."/>
        </authorList>
    </citation>
    <scope>NUCLEOTIDE SEQUENCE [GENOMIC DNA]</scope>
</reference>
<reference key="3">
    <citation type="journal article" date="1996" name="Gene">
        <title>Genetic and transcriptional organization of the Bacillus subtilis spc-alpha region.</title>
        <authorList>
            <person name="Suh J.-W."/>
            <person name="Boylan S.A."/>
            <person name="Oh S.H."/>
            <person name="Price C.W."/>
        </authorList>
    </citation>
    <scope>NUCLEOTIDE SEQUENCE [GENOMIC DNA]</scope>
    <source>
        <strain>168 / Marburg / ATCC 6051 / DSM 10 / JCM 1465 / NBRC 13719 / NCIMB 3610 / NRRL NRS-744 / VKM B-501</strain>
    </source>
</reference>
<reference key="4">
    <citation type="journal article" date="1997" name="Nature">
        <title>The complete genome sequence of the Gram-positive bacterium Bacillus subtilis.</title>
        <authorList>
            <person name="Kunst F."/>
            <person name="Ogasawara N."/>
            <person name="Moszer I."/>
            <person name="Albertini A.M."/>
            <person name="Alloni G."/>
            <person name="Azevedo V."/>
            <person name="Bertero M.G."/>
            <person name="Bessieres P."/>
            <person name="Bolotin A."/>
            <person name="Borchert S."/>
            <person name="Borriss R."/>
            <person name="Boursier L."/>
            <person name="Brans A."/>
            <person name="Braun M."/>
            <person name="Brignell S.C."/>
            <person name="Bron S."/>
            <person name="Brouillet S."/>
            <person name="Bruschi C.V."/>
            <person name="Caldwell B."/>
            <person name="Capuano V."/>
            <person name="Carter N.M."/>
            <person name="Choi S.-K."/>
            <person name="Codani J.-J."/>
            <person name="Connerton I.F."/>
            <person name="Cummings N.J."/>
            <person name="Daniel R.A."/>
            <person name="Denizot F."/>
            <person name="Devine K.M."/>
            <person name="Duesterhoeft A."/>
            <person name="Ehrlich S.D."/>
            <person name="Emmerson P.T."/>
            <person name="Entian K.-D."/>
            <person name="Errington J."/>
            <person name="Fabret C."/>
            <person name="Ferrari E."/>
            <person name="Foulger D."/>
            <person name="Fritz C."/>
            <person name="Fujita M."/>
            <person name="Fujita Y."/>
            <person name="Fuma S."/>
            <person name="Galizzi A."/>
            <person name="Galleron N."/>
            <person name="Ghim S.-Y."/>
            <person name="Glaser P."/>
            <person name="Goffeau A."/>
            <person name="Golightly E.J."/>
            <person name="Grandi G."/>
            <person name="Guiseppi G."/>
            <person name="Guy B.J."/>
            <person name="Haga K."/>
            <person name="Haiech J."/>
            <person name="Harwood C.R."/>
            <person name="Henaut A."/>
            <person name="Hilbert H."/>
            <person name="Holsappel S."/>
            <person name="Hosono S."/>
            <person name="Hullo M.-F."/>
            <person name="Itaya M."/>
            <person name="Jones L.-M."/>
            <person name="Joris B."/>
            <person name="Karamata D."/>
            <person name="Kasahara Y."/>
            <person name="Klaerr-Blanchard M."/>
            <person name="Klein C."/>
            <person name="Kobayashi Y."/>
            <person name="Koetter P."/>
            <person name="Koningstein G."/>
            <person name="Krogh S."/>
            <person name="Kumano M."/>
            <person name="Kurita K."/>
            <person name="Lapidus A."/>
            <person name="Lardinois S."/>
            <person name="Lauber J."/>
            <person name="Lazarevic V."/>
            <person name="Lee S.-M."/>
            <person name="Levine A."/>
            <person name="Liu H."/>
            <person name="Masuda S."/>
            <person name="Mauel C."/>
            <person name="Medigue C."/>
            <person name="Medina N."/>
            <person name="Mellado R.P."/>
            <person name="Mizuno M."/>
            <person name="Moestl D."/>
            <person name="Nakai S."/>
            <person name="Noback M."/>
            <person name="Noone D."/>
            <person name="O'Reilly M."/>
            <person name="Ogawa K."/>
            <person name="Ogiwara A."/>
            <person name="Oudega B."/>
            <person name="Park S.-H."/>
            <person name="Parro V."/>
            <person name="Pohl T.M."/>
            <person name="Portetelle D."/>
            <person name="Porwollik S."/>
            <person name="Prescott A.M."/>
            <person name="Presecan E."/>
            <person name="Pujic P."/>
            <person name="Purnelle B."/>
            <person name="Rapoport G."/>
            <person name="Rey M."/>
            <person name="Reynolds S."/>
            <person name="Rieger M."/>
            <person name="Rivolta C."/>
            <person name="Rocha E."/>
            <person name="Roche B."/>
            <person name="Rose M."/>
            <person name="Sadaie Y."/>
            <person name="Sato T."/>
            <person name="Scanlan E."/>
            <person name="Schleich S."/>
            <person name="Schroeter R."/>
            <person name="Scoffone F."/>
            <person name="Sekiguchi J."/>
            <person name="Sekowska A."/>
            <person name="Seror S.J."/>
            <person name="Serror P."/>
            <person name="Shin B.-S."/>
            <person name="Soldo B."/>
            <person name="Sorokin A."/>
            <person name="Tacconi E."/>
            <person name="Takagi T."/>
            <person name="Takahashi H."/>
            <person name="Takemaru K."/>
            <person name="Takeuchi M."/>
            <person name="Tamakoshi A."/>
            <person name="Tanaka T."/>
            <person name="Terpstra P."/>
            <person name="Tognoni A."/>
            <person name="Tosato V."/>
            <person name="Uchiyama S."/>
            <person name="Vandenbol M."/>
            <person name="Vannier F."/>
            <person name="Vassarotti A."/>
            <person name="Viari A."/>
            <person name="Wambutt R."/>
            <person name="Wedler E."/>
            <person name="Wedler H."/>
            <person name="Weitzenegger T."/>
            <person name="Winters P."/>
            <person name="Wipat A."/>
            <person name="Yamamoto H."/>
            <person name="Yamane K."/>
            <person name="Yasumoto K."/>
            <person name="Yata K."/>
            <person name="Yoshida K."/>
            <person name="Yoshikawa H.-F."/>
            <person name="Zumstein E."/>
            <person name="Yoshikawa H."/>
            <person name="Danchin A."/>
        </authorList>
    </citation>
    <scope>NUCLEOTIDE SEQUENCE [LARGE SCALE GENOMIC DNA]</scope>
    <source>
        <strain>168</strain>
    </source>
</reference>
<reference evidence="5 6" key="5">
    <citation type="journal article" date="2018" name="Proc. Natl. Acad. Sci. U.S.A.">
        <title>Structural basis for antibiotic resistance mediated by the Bacillus subtilis ABCF ATPase VmlR.</title>
        <authorList>
            <person name="Crowe-McAuliffe C."/>
            <person name="Graf M."/>
            <person name="Huter P."/>
            <person name="Takada H."/>
            <person name="Abdelshahid M."/>
            <person name="Novacek J."/>
            <person name="Murina V."/>
            <person name="Atkinson G.C."/>
            <person name="Hauryliuk V."/>
            <person name="Wilson D.N."/>
        </authorList>
    </citation>
    <scope>STRUCTURE BY ELECTRON MICROSCOPY (3.10 ANGSTROMS) OF 1-59 WITH AND WITHOUT VIRGINIAMYCIN M</scope>
    <scope>SUBUNIT</scope>
</reference>
<accession>P19947</accession>